<name>RL1_RICRO</name>
<dbReference type="EMBL" id="CP000766">
    <property type="protein sequence ID" value="ABY72132.1"/>
    <property type="molecule type" value="Genomic_DNA"/>
</dbReference>
<dbReference type="RefSeq" id="WP_012150394.1">
    <property type="nucleotide sequence ID" value="NC_010263.3"/>
</dbReference>
<dbReference type="SMR" id="B0BWA6"/>
<dbReference type="GeneID" id="79936970"/>
<dbReference type="KEGG" id="rrj:RrIowa_0220"/>
<dbReference type="eggNOG" id="COG0081">
    <property type="taxonomic scope" value="Bacteria"/>
</dbReference>
<dbReference type="HOGENOM" id="CLU_062853_0_0_5"/>
<dbReference type="Proteomes" id="UP000000796">
    <property type="component" value="Chromosome"/>
</dbReference>
<dbReference type="GO" id="GO:0015934">
    <property type="term" value="C:large ribosomal subunit"/>
    <property type="evidence" value="ECO:0007669"/>
    <property type="project" value="InterPro"/>
</dbReference>
<dbReference type="GO" id="GO:0019843">
    <property type="term" value="F:rRNA binding"/>
    <property type="evidence" value="ECO:0007669"/>
    <property type="project" value="UniProtKB-UniRule"/>
</dbReference>
<dbReference type="GO" id="GO:0003735">
    <property type="term" value="F:structural constituent of ribosome"/>
    <property type="evidence" value="ECO:0007669"/>
    <property type="project" value="InterPro"/>
</dbReference>
<dbReference type="GO" id="GO:0000049">
    <property type="term" value="F:tRNA binding"/>
    <property type="evidence" value="ECO:0007669"/>
    <property type="project" value="UniProtKB-KW"/>
</dbReference>
<dbReference type="GO" id="GO:0006417">
    <property type="term" value="P:regulation of translation"/>
    <property type="evidence" value="ECO:0007669"/>
    <property type="project" value="UniProtKB-KW"/>
</dbReference>
<dbReference type="GO" id="GO:0006412">
    <property type="term" value="P:translation"/>
    <property type="evidence" value="ECO:0007669"/>
    <property type="project" value="UniProtKB-UniRule"/>
</dbReference>
<dbReference type="CDD" id="cd00403">
    <property type="entry name" value="Ribosomal_L1"/>
    <property type="match status" value="1"/>
</dbReference>
<dbReference type="FunFam" id="3.40.50.790:FF:000001">
    <property type="entry name" value="50S ribosomal protein L1"/>
    <property type="match status" value="1"/>
</dbReference>
<dbReference type="Gene3D" id="3.30.190.20">
    <property type="match status" value="1"/>
</dbReference>
<dbReference type="Gene3D" id="3.40.50.790">
    <property type="match status" value="1"/>
</dbReference>
<dbReference type="HAMAP" id="MF_01318_B">
    <property type="entry name" value="Ribosomal_uL1_B"/>
    <property type="match status" value="1"/>
</dbReference>
<dbReference type="InterPro" id="IPR005878">
    <property type="entry name" value="Ribosom_uL1_bac-type"/>
</dbReference>
<dbReference type="InterPro" id="IPR002143">
    <property type="entry name" value="Ribosomal_uL1"/>
</dbReference>
<dbReference type="InterPro" id="IPR023674">
    <property type="entry name" value="Ribosomal_uL1-like"/>
</dbReference>
<dbReference type="InterPro" id="IPR028364">
    <property type="entry name" value="Ribosomal_uL1/biogenesis"/>
</dbReference>
<dbReference type="InterPro" id="IPR016095">
    <property type="entry name" value="Ribosomal_uL1_3-a/b-sand"/>
</dbReference>
<dbReference type="InterPro" id="IPR023673">
    <property type="entry name" value="Ribosomal_uL1_CS"/>
</dbReference>
<dbReference type="NCBIfam" id="TIGR01169">
    <property type="entry name" value="rplA_bact"/>
    <property type="match status" value="1"/>
</dbReference>
<dbReference type="PANTHER" id="PTHR36427">
    <property type="entry name" value="54S RIBOSOMAL PROTEIN L1, MITOCHONDRIAL"/>
    <property type="match status" value="1"/>
</dbReference>
<dbReference type="PANTHER" id="PTHR36427:SF3">
    <property type="entry name" value="LARGE RIBOSOMAL SUBUNIT PROTEIN UL1M"/>
    <property type="match status" value="1"/>
</dbReference>
<dbReference type="Pfam" id="PF00687">
    <property type="entry name" value="Ribosomal_L1"/>
    <property type="match status" value="1"/>
</dbReference>
<dbReference type="PIRSF" id="PIRSF002155">
    <property type="entry name" value="Ribosomal_L1"/>
    <property type="match status" value="1"/>
</dbReference>
<dbReference type="SUPFAM" id="SSF56808">
    <property type="entry name" value="Ribosomal protein L1"/>
    <property type="match status" value="1"/>
</dbReference>
<dbReference type="PROSITE" id="PS01199">
    <property type="entry name" value="RIBOSOMAL_L1"/>
    <property type="match status" value="1"/>
</dbReference>
<proteinExistence type="inferred from homology"/>
<evidence type="ECO:0000255" key="1">
    <source>
        <dbReference type="HAMAP-Rule" id="MF_01318"/>
    </source>
</evidence>
<evidence type="ECO:0000305" key="2"/>
<comment type="function">
    <text evidence="1">Binds directly to 23S rRNA. The L1 stalk is quite mobile in the ribosome, and is involved in E site tRNA release.</text>
</comment>
<comment type="function">
    <text evidence="1">Protein L1 is also a translational repressor protein, it controls the translation of the L11 operon by binding to its mRNA.</text>
</comment>
<comment type="subunit">
    <text evidence="1">Part of the 50S ribosomal subunit.</text>
</comment>
<comment type="similarity">
    <text evidence="1">Belongs to the universal ribosomal protein uL1 family.</text>
</comment>
<protein>
    <recommendedName>
        <fullName evidence="1">Large ribosomal subunit protein uL1</fullName>
    </recommendedName>
    <alternativeName>
        <fullName evidence="2">50S ribosomal protein L1</fullName>
    </alternativeName>
</protein>
<accession>B0BWA6</accession>
<gene>
    <name evidence="1" type="primary">rplA</name>
    <name type="ordered locus">RrIowa_0220</name>
</gene>
<reference key="1">
    <citation type="journal article" date="2008" name="Infect. Immun.">
        <title>Genomic comparison of virulent Rickettsia rickettsii Sheila Smith and avirulent Rickettsia rickettsii Iowa.</title>
        <authorList>
            <person name="Ellison D.W."/>
            <person name="Clark T.R."/>
            <person name="Sturdevant D.E."/>
            <person name="Virtaneva K."/>
            <person name="Porcella S.F."/>
            <person name="Hackstadt T."/>
        </authorList>
    </citation>
    <scope>NUCLEOTIDE SEQUENCE [LARGE SCALE GENOMIC DNA]</scope>
    <source>
        <strain>Iowa</strain>
    </source>
</reference>
<sequence>MSNKKDIAVKISGGKKIREAREKVKSDTLYNLTNAVERLKSASYVKFDPTLEIVMKLGIDSRHSDQMVRGVVNLPAGTGKTVRVAVICKEEREEEAKSAGADLVGSTNIIDEIKAGKINFDVCIATPDVMAAIGSVARILGPKGLMPNPKLGTVTLDIKNAIKNAKSGQVEYRAEKAGIIHAGLGKLSFSDQDLLKNLNAFIEAVIKAKPAGLKGSYLKAMYLSSTMGASVQIDLTSIA</sequence>
<keyword id="KW-0678">Repressor</keyword>
<keyword id="KW-0687">Ribonucleoprotein</keyword>
<keyword id="KW-0689">Ribosomal protein</keyword>
<keyword id="KW-0694">RNA-binding</keyword>
<keyword id="KW-0699">rRNA-binding</keyword>
<keyword id="KW-0810">Translation regulation</keyword>
<keyword id="KW-0820">tRNA-binding</keyword>
<organism>
    <name type="scientific">Rickettsia rickettsii (strain Iowa)</name>
    <dbReference type="NCBI Taxonomy" id="452659"/>
    <lineage>
        <taxon>Bacteria</taxon>
        <taxon>Pseudomonadati</taxon>
        <taxon>Pseudomonadota</taxon>
        <taxon>Alphaproteobacteria</taxon>
        <taxon>Rickettsiales</taxon>
        <taxon>Rickettsiaceae</taxon>
        <taxon>Rickettsieae</taxon>
        <taxon>Rickettsia</taxon>
        <taxon>spotted fever group</taxon>
    </lineage>
</organism>
<feature type="chain" id="PRO_1000086300" description="Large ribosomal subunit protein uL1">
    <location>
        <begin position="1"/>
        <end position="239"/>
    </location>
</feature>